<feature type="chain" id="PRO_0000319723" description="Phosphoribosyl-AMP cyclohydrolase">
    <location>
        <begin position="1"/>
        <end position="126"/>
    </location>
</feature>
<feature type="binding site" evidence="1">
    <location>
        <position position="76"/>
    </location>
    <ligand>
        <name>Mg(2+)</name>
        <dbReference type="ChEBI" id="CHEBI:18420"/>
    </ligand>
</feature>
<feature type="binding site" evidence="1">
    <location>
        <position position="77"/>
    </location>
    <ligand>
        <name>Zn(2+)</name>
        <dbReference type="ChEBI" id="CHEBI:29105"/>
        <note>ligand shared between dimeric partners</note>
    </ligand>
</feature>
<feature type="binding site" evidence="1">
    <location>
        <position position="78"/>
    </location>
    <ligand>
        <name>Mg(2+)</name>
        <dbReference type="ChEBI" id="CHEBI:18420"/>
    </ligand>
</feature>
<feature type="binding site" evidence="1">
    <location>
        <position position="80"/>
    </location>
    <ligand>
        <name>Mg(2+)</name>
        <dbReference type="ChEBI" id="CHEBI:18420"/>
    </ligand>
</feature>
<feature type="binding site" evidence="1">
    <location>
        <position position="94"/>
    </location>
    <ligand>
        <name>Zn(2+)</name>
        <dbReference type="ChEBI" id="CHEBI:29105"/>
        <note>ligand shared between dimeric partners</note>
    </ligand>
</feature>
<feature type="binding site" evidence="1">
    <location>
        <position position="101"/>
    </location>
    <ligand>
        <name>Zn(2+)</name>
        <dbReference type="ChEBI" id="CHEBI:29105"/>
        <note>ligand shared between dimeric partners</note>
    </ligand>
</feature>
<gene>
    <name evidence="1" type="primary">hisI</name>
    <name type="ordered locus">COSY_0275</name>
</gene>
<proteinExistence type="inferred from homology"/>
<comment type="function">
    <text evidence="1">Catalyzes the hydrolysis of the adenine ring of phosphoribosyl-AMP.</text>
</comment>
<comment type="catalytic activity">
    <reaction evidence="1">
        <text>1-(5-phospho-beta-D-ribosyl)-5'-AMP + H2O = 1-(5-phospho-beta-D-ribosyl)-5-[(5-phospho-beta-D-ribosylamino)methylideneamino]imidazole-4-carboxamide</text>
        <dbReference type="Rhea" id="RHEA:20049"/>
        <dbReference type="ChEBI" id="CHEBI:15377"/>
        <dbReference type="ChEBI" id="CHEBI:58435"/>
        <dbReference type="ChEBI" id="CHEBI:59457"/>
        <dbReference type="EC" id="3.5.4.19"/>
    </reaction>
</comment>
<comment type="cofactor">
    <cofactor evidence="1">
        <name>Mg(2+)</name>
        <dbReference type="ChEBI" id="CHEBI:18420"/>
    </cofactor>
    <text evidence="1">Binds 1 Mg(2+) ion per subunit.</text>
</comment>
<comment type="cofactor">
    <cofactor evidence="1">
        <name>Zn(2+)</name>
        <dbReference type="ChEBI" id="CHEBI:29105"/>
    </cofactor>
    <text evidence="1">Binds 1 zinc ion per subunit.</text>
</comment>
<comment type="pathway">
    <text evidence="1">Amino-acid biosynthesis; L-histidine biosynthesis; L-histidine from 5-phospho-alpha-D-ribose 1-diphosphate: step 3/9.</text>
</comment>
<comment type="subunit">
    <text evidence="1">Homodimer.</text>
</comment>
<comment type="subcellular location">
    <subcellularLocation>
        <location evidence="1">Cytoplasm</location>
    </subcellularLocation>
</comment>
<comment type="similarity">
    <text evidence="1">Belongs to the PRA-CH family.</text>
</comment>
<organism>
    <name type="scientific">Vesicomyosocius okutanii subsp. Calyptogena okutanii (strain HA)</name>
    <dbReference type="NCBI Taxonomy" id="412965"/>
    <lineage>
        <taxon>Bacteria</taxon>
        <taxon>Pseudomonadati</taxon>
        <taxon>Pseudomonadota</taxon>
        <taxon>Gammaproteobacteria</taxon>
        <taxon>Candidatus Pseudothioglobaceae</taxon>
        <taxon>Candidatus Vesicomyosocius</taxon>
    </lineage>
</organism>
<evidence type="ECO:0000255" key="1">
    <source>
        <dbReference type="HAMAP-Rule" id="MF_01021"/>
    </source>
</evidence>
<keyword id="KW-0028">Amino-acid biosynthesis</keyword>
<keyword id="KW-0963">Cytoplasm</keyword>
<keyword id="KW-0368">Histidine biosynthesis</keyword>
<keyword id="KW-0378">Hydrolase</keyword>
<keyword id="KW-0460">Magnesium</keyword>
<keyword id="KW-0479">Metal-binding</keyword>
<keyword id="KW-1185">Reference proteome</keyword>
<keyword id="KW-0862">Zinc</keyword>
<protein>
    <recommendedName>
        <fullName evidence="1">Phosphoribosyl-AMP cyclohydrolase</fullName>
        <shortName evidence="1">PRA-CH</shortName>
        <ecNumber evidence="1">3.5.4.19</ecNumber>
    </recommendedName>
</protein>
<sequence length="126" mass="14728">MSALKQIKFDEKGLIPAISQDFKTGEILMFAWMNQESLKLTIKKQQAVYYSRSRQKIWFKGEESGHIQHIKEIFTDCDNDVILLKIEQIGGISCHTGRISCFFQQLDKKNWKIITNMIKNPRDIYG</sequence>
<reference key="1">
    <citation type="journal article" date="2007" name="Curr. Biol.">
        <title>Reduced genome of the thioautotrophic intracellular symbiont in a deep-sea clam, Calyptogena okutanii.</title>
        <authorList>
            <person name="Kuwahara H."/>
            <person name="Yoshida T."/>
            <person name="Takaki Y."/>
            <person name="Shimamura S."/>
            <person name="Nishi S."/>
            <person name="Harada M."/>
            <person name="Matsuyama K."/>
            <person name="Takishita K."/>
            <person name="Kawato M."/>
            <person name="Uematsu K."/>
            <person name="Fujiwara Y."/>
            <person name="Sato T."/>
            <person name="Kato C."/>
            <person name="Kitagawa M."/>
            <person name="Kato I."/>
            <person name="Maruyama T."/>
        </authorList>
    </citation>
    <scope>NUCLEOTIDE SEQUENCE [LARGE SCALE GENOMIC DNA]</scope>
    <source>
        <strain>HA</strain>
    </source>
</reference>
<name>HIS3_VESOH</name>
<dbReference type="EC" id="3.5.4.19" evidence="1"/>
<dbReference type="EMBL" id="AP009247">
    <property type="protein sequence ID" value="BAF61404.1"/>
    <property type="molecule type" value="Genomic_DNA"/>
</dbReference>
<dbReference type="RefSeq" id="WP_011929674.1">
    <property type="nucleotide sequence ID" value="NC_009465.1"/>
</dbReference>
<dbReference type="SMR" id="A5CXC7"/>
<dbReference type="STRING" id="412965.COSY_0275"/>
<dbReference type="KEGG" id="vok:COSY_0275"/>
<dbReference type="eggNOG" id="COG0139">
    <property type="taxonomic scope" value="Bacteria"/>
</dbReference>
<dbReference type="HOGENOM" id="CLU_048577_5_0_6"/>
<dbReference type="OrthoDB" id="9795769at2"/>
<dbReference type="UniPathway" id="UPA00031">
    <property type="reaction ID" value="UER00008"/>
</dbReference>
<dbReference type="Proteomes" id="UP000000247">
    <property type="component" value="Chromosome"/>
</dbReference>
<dbReference type="GO" id="GO:0005737">
    <property type="term" value="C:cytoplasm"/>
    <property type="evidence" value="ECO:0007669"/>
    <property type="project" value="UniProtKB-SubCell"/>
</dbReference>
<dbReference type="GO" id="GO:0000287">
    <property type="term" value="F:magnesium ion binding"/>
    <property type="evidence" value="ECO:0007669"/>
    <property type="project" value="UniProtKB-UniRule"/>
</dbReference>
<dbReference type="GO" id="GO:0004635">
    <property type="term" value="F:phosphoribosyl-AMP cyclohydrolase activity"/>
    <property type="evidence" value="ECO:0007669"/>
    <property type="project" value="UniProtKB-UniRule"/>
</dbReference>
<dbReference type="GO" id="GO:0008270">
    <property type="term" value="F:zinc ion binding"/>
    <property type="evidence" value="ECO:0007669"/>
    <property type="project" value="UniProtKB-UniRule"/>
</dbReference>
<dbReference type="GO" id="GO:0000105">
    <property type="term" value="P:L-histidine biosynthetic process"/>
    <property type="evidence" value="ECO:0007669"/>
    <property type="project" value="UniProtKB-UniRule"/>
</dbReference>
<dbReference type="FunFam" id="3.10.20.810:FF:000001">
    <property type="entry name" value="Histidine biosynthesis bifunctional protein HisIE"/>
    <property type="match status" value="1"/>
</dbReference>
<dbReference type="Gene3D" id="3.10.20.810">
    <property type="entry name" value="Phosphoribosyl-AMP cyclohydrolase"/>
    <property type="match status" value="1"/>
</dbReference>
<dbReference type="HAMAP" id="MF_01021">
    <property type="entry name" value="HisI"/>
    <property type="match status" value="1"/>
</dbReference>
<dbReference type="InterPro" id="IPR026660">
    <property type="entry name" value="PRA-CH"/>
</dbReference>
<dbReference type="InterPro" id="IPR002496">
    <property type="entry name" value="PRib_AMP_CycHydrolase_dom"/>
</dbReference>
<dbReference type="InterPro" id="IPR038019">
    <property type="entry name" value="PRib_AMP_CycHydrolase_sf"/>
</dbReference>
<dbReference type="NCBIfam" id="NF000768">
    <property type="entry name" value="PRK00051.1"/>
    <property type="match status" value="1"/>
</dbReference>
<dbReference type="PANTHER" id="PTHR42945">
    <property type="entry name" value="HISTIDINE BIOSYNTHESIS BIFUNCTIONAL PROTEIN"/>
    <property type="match status" value="1"/>
</dbReference>
<dbReference type="PANTHER" id="PTHR42945:SF1">
    <property type="entry name" value="HISTIDINE BIOSYNTHESIS BIFUNCTIONAL PROTEIN HIS7"/>
    <property type="match status" value="1"/>
</dbReference>
<dbReference type="Pfam" id="PF01502">
    <property type="entry name" value="PRA-CH"/>
    <property type="match status" value="1"/>
</dbReference>
<dbReference type="SUPFAM" id="SSF141734">
    <property type="entry name" value="HisI-like"/>
    <property type="match status" value="1"/>
</dbReference>
<accession>A5CXC7</accession>